<protein>
    <recommendedName>
        <fullName evidence="1">Protease HtpX homolog</fullName>
        <ecNumber evidence="1">3.4.24.-</ecNumber>
    </recommendedName>
</protein>
<dbReference type="EC" id="3.4.24.-" evidence="1"/>
<dbReference type="EMBL" id="CR626927">
    <property type="protein sequence ID" value="CAH07650.1"/>
    <property type="molecule type" value="Genomic_DNA"/>
</dbReference>
<dbReference type="RefSeq" id="WP_005800413.1">
    <property type="nucleotide sequence ID" value="NZ_UFTH01000001.1"/>
</dbReference>
<dbReference type="PaxDb" id="272559-BF9343_1869"/>
<dbReference type="KEGG" id="bfs:BF9343_1869"/>
<dbReference type="eggNOG" id="COG0501">
    <property type="taxonomic scope" value="Bacteria"/>
</dbReference>
<dbReference type="HOGENOM" id="CLU_042266_2_0_10"/>
<dbReference type="Proteomes" id="UP000006731">
    <property type="component" value="Chromosome"/>
</dbReference>
<dbReference type="GO" id="GO:0005886">
    <property type="term" value="C:plasma membrane"/>
    <property type="evidence" value="ECO:0007669"/>
    <property type="project" value="UniProtKB-SubCell"/>
</dbReference>
<dbReference type="GO" id="GO:0004222">
    <property type="term" value="F:metalloendopeptidase activity"/>
    <property type="evidence" value="ECO:0007669"/>
    <property type="project" value="UniProtKB-UniRule"/>
</dbReference>
<dbReference type="GO" id="GO:0008270">
    <property type="term" value="F:zinc ion binding"/>
    <property type="evidence" value="ECO:0007669"/>
    <property type="project" value="UniProtKB-UniRule"/>
</dbReference>
<dbReference type="GO" id="GO:0006508">
    <property type="term" value="P:proteolysis"/>
    <property type="evidence" value="ECO:0007669"/>
    <property type="project" value="UniProtKB-KW"/>
</dbReference>
<dbReference type="CDD" id="cd07340">
    <property type="entry name" value="M48B_Htpx_like"/>
    <property type="match status" value="1"/>
</dbReference>
<dbReference type="Gene3D" id="3.30.2010.10">
    <property type="entry name" value="Metalloproteases ('zincins'), catalytic domain"/>
    <property type="match status" value="1"/>
</dbReference>
<dbReference type="HAMAP" id="MF_00188">
    <property type="entry name" value="Pept_M48_protease_HtpX"/>
    <property type="match status" value="1"/>
</dbReference>
<dbReference type="InterPro" id="IPR050083">
    <property type="entry name" value="HtpX_protease"/>
</dbReference>
<dbReference type="InterPro" id="IPR022919">
    <property type="entry name" value="Pept_M48_protease_HtpX"/>
</dbReference>
<dbReference type="InterPro" id="IPR001915">
    <property type="entry name" value="Peptidase_M48"/>
</dbReference>
<dbReference type="PANTHER" id="PTHR43221">
    <property type="entry name" value="PROTEASE HTPX"/>
    <property type="match status" value="1"/>
</dbReference>
<dbReference type="PANTHER" id="PTHR43221:SF2">
    <property type="entry name" value="PROTEASE HTPX HOMOLOG"/>
    <property type="match status" value="1"/>
</dbReference>
<dbReference type="Pfam" id="PF01435">
    <property type="entry name" value="Peptidase_M48"/>
    <property type="match status" value="1"/>
</dbReference>
<organism>
    <name type="scientific">Bacteroides fragilis (strain ATCC 25285 / DSM 2151 / CCUG 4856 / JCM 11019 / LMG 10263 / NCTC 9343 / Onslow / VPI 2553 / EN-2)</name>
    <dbReference type="NCBI Taxonomy" id="272559"/>
    <lineage>
        <taxon>Bacteria</taxon>
        <taxon>Pseudomonadati</taxon>
        <taxon>Bacteroidota</taxon>
        <taxon>Bacteroidia</taxon>
        <taxon>Bacteroidales</taxon>
        <taxon>Bacteroidaceae</taxon>
        <taxon>Bacteroides</taxon>
    </lineage>
</organism>
<evidence type="ECO:0000255" key="1">
    <source>
        <dbReference type="HAMAP-Rule" id="MF_00188"/>
    </source>
</evidence>
<keyword id="KW-0997">Cell inner membrane</keyword>
<keyword id="KW-1003">Cell membrane</keyword>
<keyword id="KW-0378">Hydrolase</keyword>
<keyword id="KW-0472">Membrane</keyword>
<keyword id="KW-0479">Metal-binding</keyword>
<keyword id="KW-0482">Metalloprotease</keyword>
<keyword id="KW-0645">Protease</keyword>
<keyword id="KW-0812">Transmembrane</keyword>
<keyword id="KW-1133">Transmembrane helix</keyword>
<keyword id="KW-0862">Zinc</keyword>
<proteinExistence type="inferred from homology"/>
<accession>Q5LE03</accession>
<comment type="cofactor">
    <cofactor evidence="1">
        <name>Zn(2+)</name>
        <dbReference type="ChEBI" id="CHEBI:29105"/>
    </cofactor>
    <text evidence="1">Binds 1 zinc ion per subunit.</text>
</comment>
<comment type="subcellular location">
    <subcellularLocation>
        <location evidence="1">Cell inner membrane</location>
        <topology evidence="1">Multi-pass membrane protein</topology>
    </subcellularLocation>
</comment>
<comment type="similarity">
    <text evidence="1">Belongs to the peptidase M48B family.</text>
</comment>
<feature type="chain" id="PRO_1000192737" description="Protease HtpX homolog">
    <location>
        <begin position="1"/>
        <end position="322"/>
    </location>
</feature>
<feature type="transmembrane region" description="Helical" evidence="1">
    <location>
        <begin position="19"/>
        <end position="39"/>
    </location>
</feature>
<feature type="transmembrane region" description="Helical" evidence="1">
    <location>
        <begin position="61"/>
        <end position="81"/>
    </location>
</feature>
<feature type="transmembrane region" description="Helical" evidence="1">
    <location>
        <begin position="175"/>
        <end position="195"/>
    </location>
</feature>
<feature type="transmembrane region" description="Helical" evidence="1">
    <location>
        <begin position="216"/>
        <end position="236"/>
    </location>
</feature>
<feature type="active site" evidence="1">
    <location>
        <position position="166"/>
    </location>
</feature>
<feature type="binding site" evidence="1">
    <location>
        <position position="165"/>
    </location>
    <ligand>
        <name>Zn(2+)</name>
        <dbReference type="ChEBI" id="CHEBI:29105"/>
        <note>catalytic</note>
    </ligand>
</feature>
<feature type="binding site" evidence="1">
    <location>
        <position position="169"/>
    </location>
    <ligand>
        <name>Zn(2+)</name>
        <dbReference type="ChEBI" id="CHEBI:29105"/>
        <note>catalytic</note>
    </ligand>
</feature>
<feature type="binding site" evidence="1">
    <location>
        <position position="245"/>
    </location>
    <ligand>
        <name>Zn(2+)</name>
        <dbReference type="ChEBI" id="CHEBI:29105"/>
        <note>catalytic</note>
    </ligand>
</feature>
<gene>
    <name evidence="1" type="primary">htpX</name>
    <name type="ordered locus">BF1952</name>
</gene>
<name>HTPX_BACFN</name>
<reference key="1">
    <citation type="journal article" date="2005" name="Science">
        <title>Extensive DNA inversions in the B. fragilis genome control variable gene expression.</title>
        <authorList>
            <person name="Cerdeno-Tarraga A.-M."/>
            <person name="Patrick S."/>
            <person name="Crossman L.C."/>
            <person name="Blakely G."/>
            <person name="Abratt V."/>
            <person name="Lennard N."/>
            <person name="Poxton I."/>
            <person name="Duerden B."/>
            <person name="Harris B."/>
            <person name="Quail M.A."/>
            <person name="Barron A."/>
            <person name="Clark L."/>
            <person name="Corton C."/>
            <person name="Doggett J."/>
            <person name="Holden M.T.G."/>
            <person name="Larke N."/>
            <person name="Line A."/>
            <person name="Lord A."/>
            <person name="Norbertczak H."/>
            <person name="Ormond D."/>
            <person name="Price C."/>
            <person name="Rabbinowitsch E."/>
            <person name="Woodward J."/>
            <person name="Barrell B.G."/>
            <person name="Parkhill J."/>
        </authorList>
    </citation>
    <scope>NUCLEOTIDE SEQUENCE [LARGE SCALE GENOMIC DNA]</scope>
    <source>
        <strain>ATCC 25285 / DSM 2151 / CCUG 4856 / JCM 11019 / LMG 10263 / NCTC 9343 / Onslow / VPI 2553 / EN-2</strain>
    </source>
</reference>
<sequence>MQYVGIQTQQSRNNLRSGILLILFPCLVAVLTYLFCYLLITFTVEDDYGQYNTLAMTNQMFINLIPYIIGGVLVWFIIAYFTNSSIIKAATGARPLERKENKRIYNLVENLCMSQGMKMPKINIIDDDSLNAYASGINEQTYTVTLSKGIIEKLNDEELEGVIAHELTHIRNHDVRLLIISIVFVGIFSMLAQIALRSVYYSSWTRSRNDKNNGAILILVLAMIVAAIGYFFATLMRFAISRKREYMADAGAAEMTKNPLALASALRKISADPDIEAVEREDVAQLFIQHPGKQAKSALSGLSGLFATHPPIEKRIAILEQF</sequence>